<comment type="function">
    <text evidence="1">Responsible for synthesis of pseudouridine from uracil-13 in transfer RNAs.</text>
</comment>
<comment type="catalytic activity">
    <reaction evidence="1">
        <text>uridine(13) in tRNA = pseudouridine(13) in tRNA</text>
        <dbReference type="Rhea" id="RHEA:42540"/>
        <dbReference type="Rhea" id="RHEA-COMP:10105"/>
        <dbReference type="Rhea" id="RHEA-COMP:10106"/>
        <dbReference type="ChEBI" id="CHEBI:65314"/>
        <dbReference type="ChEBI" id="CHEBI:65315"/>
        <dbReference type="EC" id="5.4.99.27"/>
    </reaction>
</comment>
<comment type="similarity">
    <text evidence="1">Belongs to the pseudouridine synthase TruD family.</text>
</comment>
<reference key="1">
    <citation type="submission" date="2006-06" db="EMBL/GenBank/DDBJ databases">
        <title>Complete sequence of Pseudoalteromonas atlantica T6c.</title>
        <authorList>
            <consortium name="US DOE Joint Genome Institute"/>
            <person name="Copeland A."/>
            <person name="Lucas S."/>
            <person name="Lapidus A."/>
            <person name="Barry K."/>
            <person name="Detter J.C."/>
            <person name="Glavina del Rio T."/>
            <person name="Hammon N."/>
            <person name="Israni S."/>
            <person name="Dalin E."/>
            <person name="Tice H."/>
            <person name="Pitluck S."/>
            <person name="Saunders E."/>
            <person name="Brettin T."/>
            <person name="Bruce D."/>
            <person name="Han C."/>
            <person name="Tapia R."/>
            <person name="Gilna P."/>
            <person name="Schmutz J."/>
            <person name="Larimer F."/>
            <person name="Land M."/>
            <person name="Hauser L."/>
            <person name="Kyrpides N."/>
            <person name="Kim E."/>
            <person name="Karls A.C."/>
            <person name="Bartlett D."/>
            <person name="Higgins B.P."/>
            <person name="Richardson P."/>
        </authorList>
    </citation>
    <scope>NUCLEOTIDE SEQUENCE [LARGE SCALE GENOMIC DNA]</scope>
    <source>
        <strain>T6c / ATCC BAA-1087</strain>
    </source>
</reference>
<evidence type="ECO:0000255" key="1">
    <source>
        <dbReference type="HAMAP-Rule" id="MF_01082"/>
    </source>
</evidence>
<dbReference type="EC" id="5.4.99.27" evidence="1"/>
<dbReference type="EMBL" id="CP000388">
    <property type="protein sequence ID" value="ABG42359.1"/>
    <property type="molecule type" value="Genomic_DNA"/>
</dbReference>
<dbReference type="RefSeq" id="WP_011576567.1">
    <property type="nucleotide sequence ID" value="NC_008228.1"/>
</dbReference>
<dbReference type="SMR" id="Q15P29"/>
<dbReference type="STRING" id="342610.Patl_3859"/>
<dbReference type="KEGG" id="pat:Patl_3859"/>
<dbReference type="eggNOG" id="COG0585">
    <property type="taxonomic scope" value="Bacteria"/>
</dbReference>
<dbReference type="HOGENOM" id="CLU_005281_4_0_6"/>
<dbReference type="OrthoDB" id="1550679at2"/>
<dbReference type="Proteomes" id="UP000001981">
    <property type="component" value="Chromosome"/>
</dbReference>
<dbReference type="GO" id="GO:0005829">
    <property type="term" value="C:cytosol"/>
    <property type="evidence" value="ECO:0007669"/>
    <property type="project" value="TreeGrafter"/>
</dbReference>
<dbReference type="GO" id="GO:0003723">
    <property type="term" value="F:RNA binding"/>
    <property type="evidence" value="ECO:0007669"/>
    <property type="project" value="InterPro"/>
</dbReference>
<dbReference type="GO" id="GO:0160150">
    <property type="term" value="F:tRNA pseudouridine(13) synthase activity"/>
    <property type="evidence" value="ECO:0007669"/>
    <property type="project" value="UniProtKB-EC"/>
</dbReference>
<dbReference type="GO" id="GO:0031119">
    <property type="term" value="P:tRNA pseudouridine synthesis"/>
    <property type="evidence" value="ECO:0007669"/>
    <property type="project" value="UniProtKB-UniRule"/>
</dbReference>
<dbReference type="CDD" id="cd02575">
    <property type="entry name" value="PseudoU_synth_EcTruD"/>
    <property type="match status" value="1"/>
</dbReference>
<dbReference type="Gene3D" id="3.30.2350.20">
    <property type="entry name" value="TruD, catalytic domain"/>
    <property type="match status" value="1"/>
</dbReference>
<dbReference type="Gene3D" id="3.30.2340.10">
    <property type="entry name" value="TruD, insertion domain"/>
    <property type="match status" value="1"/>
</dbReference>
<dbReference type="HAMAP" id="MF_01082">
    <property type="entry name" value="TruD"/>
    <property type="match status" value="1"/>
</dbReference>
<dbReference type="InterPro" id="IPR020103">
    <property type="entry name" value="PsdUridine_synth_cat_dom_sf"/>
</dbReference>
<dbReference type="InterPro" id="IPR001656">
    <property type="entry name" value="PsdUridine_synth_TruD"/>
</dbReference>
<dbReference type="InterPro" id="IPR011760">
    <property type="entry name" value="PsdUridine_synth_TruD_insert"/>
</dbReference>
<dbReference type="InterPro" id="IPR042214">
    <property type="entry name" value="TruD_catalytic"/>
</dbReference>
<dbReference type="InterPro" id="IPR043165">
    <property type="entry name" value="TruD_insert_sf"/>
</dbReference>
<dbReference type="InterPro" id="IPR050170">
    <property type="entry name" value="TruD_pseudoU_synthase"/>
</dbReference>
<dbReference type="PANTHER" id="PTHR47811">
    <property type="entry name" value="TRNA PSEUDOURIDINE SYNTHASE D"/>
    <property type="match status" value="1"/>
</dbReference>
<dbReference type="PANTHER" id="PTHR47811:SF1">
    <property type="entry name" value="TRNA PSEUDOURIDINE SYNTHASE D"/>
    <property type="match status" value="1"/>
</dbReference>
<dbReference type="Pfam" id="PF01142">
    <property type="entry name" value="TruD"/>
    <property type="match status" value="2"/>
</dbReference>
<dbReference type="SUPFAM" id="SSF55120">
    <property type="entry name" value="Pseudouridine synthase"/>
    <property type="match status" value="1"/>
</dbReference>
<dbReference type="PROSITE" id="PS50984">
    <property type="entry name" value="TRUD"/>
    <property type="match status" value="1"/>
</dbReference>
<gene>
    <name evidence="1" type="primary">truD</name>
    <name type="ordered locus">Patl_3859</name>
</gene>
<sequence>MQINHWQYLSSKPESTGIFKQQPDDFVVQEILGYEPVGEGEHIYLWVRKEGLNTAYLAEQIAKFAQLPLRAVTYAGRKDKHSVSEQWFGVHKPGKAEYDWSALNVPGATVLKAIRHNKKLRTGVLKGNKFTILMRDVTPSDDLAQRIAQVSLSGAPNYYGPQRFGDSRYDPKGSNLMLAEKMINGEVIRNRNKRSMAISALRSWLFNEVLSERINAGDFAQPLEGDVMSLAGNASYFVSDDIDDTIKQRLATRDITISAPLWGKGELASTGSALAFEKSVVMNHPKITKTLASLGLEQERRPIVLYPSNLTWAWEQNNLRIAFELPAGTFATSVLREILNVESVDTGPSE</sequence>
<organism>
    <name type="scientific">Pseudoalteromonas atlantica (strain T6c / ATCC BAA-1087)</name>
    <dbReference type="NCBI Taxonomy" id="3042615"/>
    <lineage>
        <taxon>Bacteria</taxon>
        <taxon>Pseudomonadati</taxon>
        <taxon>Pseudomonadota</taxon>
        <taxon>Gammaproteobacteria</taxon>
        <taxon>Alteromonadales</taxon>
        <taxon>Alteromonadaceae</taxon>
        <taxon>Paraglaciecola</taxon>
    </lineage>
</organism>
<name>TRUD_PSEA6</name>
<protein>
    <recommendedName>
        <fullName evidence="1">tRNA pseudouridine synthase D</fullName>
        <ecNumber evidence="1">5.4.99.27</ecNumber>
    </recommendedName>
    <alternativeName>
        <fullName evidence="1">tRNA pseudouridine(13) synthase</fullName>
    </alternativeName>
    <alternativeName>
        <fullName evidence="1">tRNA pseudouridylate synthase D</fullName>
    </alternativeName>
    <alternativeName>
        <fullName evidence="1">tRNA-uridine isomerase D</fullName>
    </alternativeName>
</protein>
<feature type="chain" id="PRO_1000149847" description="tRNA pseudouridine synthase D">
    <location>
        <begin position="1"/>
        <end position="350"/>
    </location>
</feature>
<feature type="domain" description="TRUD" evidence="1">
    <location>
        <begin position="154"/>
        <end position="306"/>
    </location>
</feature>
<feature type="active site" description="Nucleophile" evidence="1">
    <location>
        <position position="79"/>
    </location>
</feature>
<proteinExistence type="inferred from homology"/>
<keyword id="KW-0413">Isomerase</keyword>
<keyword id="KW-0819">tRNA processing</keyword>
<accession>Q15P29</accession>